<accession>Q5B0N3</accession>
<accession>C8UZV4</accession>
<feature type="transit peptide" description="Mitochondrion" evidence="2">
    <location>
        <begin position="1"/>
        <end status="unknown"/>
    </location>
</feature>
<feature type="chain" id="PRO_0000372402" description="Large ribosomal subunit protein uL29m">
    <location>
        <begin status="unknown"/>
        <end position="219"/>
    </location>
</feature>
<feature type="region of interest" description="Disordered" evidence="3">
    <location>
        <begin position="77"/>
        <end position="97"/>
    </location>
</feature>
<feature type="compositionally biased region" description="Basic and acidic residues" evidence="3">
    <location>
        <begin position="87"/>
        <end position="97"/>
    </location>
</feature>
<comment type="subunit">
    <text evidence="1">Component of the mitochondrial large ribosomal subunit. Mature mitochondrial ribosomes consist of a small (37S) and a large (54S) subunit. The 37S subunit contains at least 33 different proteins and 1 molecule of RNA (15S). The 54S subunit contains at least 45 different proteins and 1 molecule of RNA (21S) (By similarity).</text>
</comment>
<comment type="subcellular location">
    <subcellularLocation>
        <location evidence="1">Mitochondrion</location>
    </subcellularLocation>
</comment>
<comment type="similarity">
    <text evidence="4">Belongs to the universal ribosomal protein uL29 family.</text>
</comment>
<comment type="sequence caution" evidence="4">
    <conflict type="erroneous gene model prediction">
        <sequence resource="EMBL-CDS" id="CBF70612"/>
    </conflict>
</comment>
<proteinExistence type="inferred from homology"/>
<protein>
    <recommendedName>
        <fullName evidence="4">Large ribosomal subunit protein uL29m</fullName>
    </recommendedName>
    <alternativeName>
        <fullName>54S ribosomal protein L4, mitochondrial</fullName>
    </alternativeName>
</protein>
<gene>
    <name type="primary">mrpl4</name>
    <name type="ORF">AN5897</name>
</gene>
<evidence type="ECO:0000250" key="1"/>
<evidence type="ECO:0000255" key="2"/>
<evidence type="ECO:0000256" key="3">
    <source>
        <dbReference type="SAM" id="MobiDB-lite"/>
    </source>
</evidence>
<evidence type="ECO:0000305" key="4"/>
<reference key="1">
    <citation type="journal article" date="2005" name="Nature">
        <title>Sequencing of Aspergillus nidulans and comparative analysis with A. fumigatus and A. oryzae.</title>
        <authorList>
            <person name="Galagan J.E."/>
            <person name="Calvo S.E."/>
            <person name="Cuomo C."/>
            <person name="Ma L.-J."/>
            <person name="Wortman J.R."/>
            <person name="Batzoglou S."/>
            <person name="Lee S.-I."/>
            <person name="Bastuerkmen M."/>
            <person name="Spevak C.C."/>
            <person name="Clutterbuck J."/>
            <person name="Kapitonov V."/>
            <person name="Jurka J."/>
            <person name="Scazzocchio C."/>
            <person name="Farman M.L."/>
            <person name="Butler J."/>
            <person name="Purcell S."/>
            <person name="Harris S."/>
            <person name="Braus G.H."/>
            <person name="Draht O."/>
            <person name="Busch S."/>
            <person name="D'Enfert C."/>
            <person name="Bouchier C."/>
            <person name="Goldman G.H."/>
            <person name="Bell-Pedersen D."/>
            <person name="Griffiths-Jones S."/>
            <person name="Doonan J.H."/>
            <person name="Yu J."/>
            <person name="Vienken K."/>
            <person name="Pain A."/>
            <person name="Freitag M."/>
            <person name="Selker E.U."/>
            <person name="Archer D.B."/>
            <person name="Penalva M.A."/>
            <person name="Oakley B.R."/>
            <person name="Momany M."/>
            <person name="Tanaka T."/>
            <person name="Kumagai T."/>
            <person name="Asai K."/>
            <person name="Machida M."/>
            <person name="Nierman W.C."/>
            <person name="Denning D.W."/>
            <person name="Caddick M.X."/>
            <person name="Hynes M."/>
            <person name="Paoletti M."/>
            <person name="Fischer R."/>
            <person name="Miller B.L."/>
            <person name="Dyer P.S."/>
            <person name="Sachs M.S."/>
            <person name="Osmani S.A."/>
            <person name="Birren B.W."/>
        </authorList>
    </citation>
    <scope>NUCLEOTIDE SEQUENCE [LARGE SCALE GENOMIC DNA]</scope>
    <source>
        <strain>FGSC A4 / ATCC 38163 / CBS 112.46 / NRRL 194 / M139</strain>
    </source>
</reference>
<reference key="2">
    <citation type="journal article" date="2009" name="Fungal Genet. Biol.">
        <title>The 2008 update of the Aspergillus nidulans genome annotation: a community effort.</title>
        <authorList>
            <person name="Wortman J.R."/>
            <person name="Gilsenan J.M."/>
            <person name="Joardar V."/>
            <person name="Deegan J."/>
            <person name="Clutterbuck J."/>
            <person name="Andersen M.R."/>
            <person name="Archer D."/>
            <person name="Bencina M."/>
            <person name="Braus G."/>
            <person name="Coutinho P."/>
            <person name="von Dohren H."/>
            <person name="Doonan J."/>
            <person name="Driessen A.J."/>
            <person name="Durek P."/>
            <person name="Espeso E."/>
            <person name="Fekete E."/>
            <person name="Flipphi M."/>
            <person name="Estrada C.G."/>
            <person name="Geysens S."/>
            <person name="Goldman G."/>
            <person name="de Groot P.W."/>
            <person name="Hansen K."/>
            <person name="Harris S.D."/>
            <person name="Heinekamp T."/>
            <person name="Helmstaedt K."/>
            <person name="Henrissat B."/>
            <person name="Hofmann G."/>
            <person name="Homan T."/>
            <person name="Horio T."/>
            <person name="Horiuchi H."/>
            <person name="James S."/>
            <person name="Jones M."/>
            <person name="Karaffa L."/>
            <person name="Karanyi Z."/>
            <person name="Kato M."/>
            <person name="Keller N."/>
            <person name="Kelly D.E."/>
            <person name="Kiel J.A."/>
            <person name="Kim J.M."/>
            <person name="van der Klei I.J."/>
            <person name="Klis F.M."/>
            <person name="Kovalchuk A."/>
            <person name="Krasevec N."/>
            <person name="Kubicek C.P."/>
            <person name="Liu B."/>
            <person name="Maccabe A."/>
            <person name="Meyer V."/>
            <person name="Mirabito P."/>
            <person name="Miskei M."/>
            <person name="Mos M."/>
            <person name="Mullins J."/>
            <person name="Nelson D.R."/>
            <person name="Nielsen J."/>
            <person name="Oakley B.R."/>
            <person name="Osmani S.A."/>
            <person name="Pakula T."/>
            <person name="Paszewski A."/>
            <person name="Paulsen I."/>
            <person name="Pilsyk S."/>
            <person name="Pocsi I."/>
            <person name="Punt P.J."/>
            <person name="Ram A.F."/>
            <person name="Ren Q."/>
            <person name="Robellet X."/>
            <person name="Robson G."/>
            <person name="Seiboth B."/>
            <person name="van Solingen P."/>
            <person name="Specht T."/>
            <person name="Sun J."/>
            <person name="Taheri-Talesh N."/>
            <person name="Takeshita N."/>
            <person name="Ussery D."/>
            <person name="vanKuyk P.A."/>
            <person name="Visser H."/>
            <person name="van de Vondervoort P.J."/>
            <person name="de Vries R.P."/>
            <person name="Walton J."/>
            <person name="Xiang X."/>
            <person name="Xiong Y."/>
            <person name="Zeng A.P."/>
            <person name="Brandt B.W."/>
            <person name="Cornell M.J."/>
            <person name="van den Hondel C.A."/>
            <person name="Visser J."/>
            <person name="Oliver S.G."/>
            <person name="Turner G."/>
        </authorList>
    </citation>
    <scope>GENOME REANNOTATION</scope>
    <source>
        <strain>FGSC A4 / ATCC 38163 / CBS 112.46 / NRRL 194 / M139</strain>
    </source>
</reference>
<keyword id="KW-0496">Mitochondrion</keyword>
<keyword id="KW-1185">Reference proteome</keyword>
<keyword id="KW-0687">Ribonucleoprotein</keyword>
<keyword id="KW-0689">Ribosomal protein</keyword>
<keyword id="KW-0809">Transit peptide</keyword>
<sequence>MHRQSVVRLSRQLGAFPLVELPPPYLAPSLHFPLNRSSVQTSNFSSTAPAAGHGKDLNKSRAVSAIHRTGPRFKLGASKYPLPKPVSPEKLEKRESTPDHGLWGFFPKDRSALSTPEYDNAHGRSWSIQELREKSWEDLHSLWWVCLKEKNRIATSNLERKRLKAGYGEWEANQRLRTIRVTQLNIKHVLRERWYAWEDAQNLYKKGYRPQNEDTEESA</sequence>
<organism>
    <name type="scientific">Emericella nidulans (strain FGSC A4 / ATCC 38163 / CBS 112.46 / NRRL 194 / M139)</name>
    <name type="common">Aspergillus nidulans</name>
    <dbReference type="NCBI Taxonomy" id="227321"/>
    <lineage>
        <taxon>Eukaryota</taxon>
        <taxon>Fungi</taxon>
        <taxon>Dikarya</taxon>
        <taxon>Ascomycota</taxon>
        <taxon>Pezizomycotina</taxon>
        <taxon>Eurotiomycetes</taxon>
        <taxon>Eurotiomycetidae</taxon>
        <taxon>Eurotiales</taxon>
        <taxon>Aspergillaceae</taxon>
        <taxon>Aspergillus</taxon>
        <taxon>Aspergillus subgen. Nidulantes</taxon>
    </lineage>
</organism>
<name>RM04_EMENI</name>
<dbReference type="EMBL" id="AACD01000101">
    <property type="protein sequence ID" value="EAA57760.1"/>
    <property type="molecule type" value="Genomic_DNA"/>
</dbReference>
<dbReference type="EMBL" id="BN001301">
    <property type="protein sequence ID" value="CBF70612.1"/>
    <property type="status" value="ALT_SEQ"/>
    <property type="molecule type" value="Genomic_DNA"/>
</dbReference>
<dbReference type="RefSeq" id="XP_663501.1">
    <property type="nucleotide sequence ID" value="XM_658409.1"/>
</dbReference>
<dbReference type="SMR" id="Q5B0N3"/>
<dbReference type="STRING" id="227321.Q5B0N3"/>
<dbReference type="VEuPathDB" id="FungiDB:AN5897"/>
<dbReference type="eggNOG" id="KOG3331">
    <property type="taxonomic scope" value="Eukaryota"/>
</dbReference>
<dbReference type="HOGENOM" id="CLU_063281_0_0_1"/>
<dbReference type="InParanoid" id="Q5B0N3"/>
<dbReference type="Proteomes" id="UP000000560">
    <property type="component" value="Chromosome I"/>
</dbReference>
<dbReference type="GO" id="GO:0005762">
    <property type="term" value="C:mitochondrial large ribosomal subunit"/>
    <property type="evidence" value="ECO:0000318"/>
    <property type="project" value="GO_Central"/>
</dbReference>
<dbReference type="GO" id="GO:0003735">
    <property type="term" value="F:structural constituent of ribosome"/>
    <property type="evidence" value="ECO:0000318"/>
    <property type="project" value="GO_Central"/>
</dbReference>
<dbReference type="GO" id="GO:0032543">
    <property type="term" value="P:mitochondrial translation"/>
    <property type="evidence" value="ECO:0000318"/>
    <property type="project" value="GO_Central"/>
</dbReference>
<dbReference type="Gene3D" id="6.10.330.20">
    <property type="match status" value="1"/>
</dbReference>
<dbReference type="InterPro" id="IPR038340">
    <property type="entry name" value="MRP-L47_sf"/>
</dbReference>
<dbReference type="InterPro" id="IPR010729">
    <property type="entry name" value="Ribosomal_uL29_mit"/>
</dbReference>
<dbReference type="PANTHER" id="PTHR21183:SF18">
    <property type="entry name" value="LARGE RIBOSOMAL SUBUNIT PROTEIN UL29M"/>
    <property type="match status" value="1"/>
</dbReference>
<dbReference type="PANTHER" id="PTHR21183">
    <property type="entry name" value="RIBOSOMAL PROTEIN L47, MITOCHONDRIAL-RELATED"/>
    <property type="match status" value="1"/>
</dbReference>
<dbReference type="Pfam" id="PF06984">
    <property type="entry name" value="MRP-L47"/>
    <property type="match status" value="1"/>
</dbReference>